<feature type="chain" id="PRO_1000077366" description="Threonine--tRNA ligase">
    <location>
        <begin position="1"/>
        <end position="652"/>
    </location>
</feature>
<feature type="domain" description="TGS" evidence="2">
    <location>
        <begin position="1"/>
        <end position="61"/>
    </location>
</feature>
<feature type="region of interest" description="Catalytic" evidence="1">
    <location>
        <begin position="243"/>
        <end position="548"/>
    </location>
</feature>
<feature type="binding site" evidence="1">
    <location>
        <position position="348"/>
    </location>
    <ligand>
        <name>Zn(2+)</name>
        <dbReference type="ChEBI" id="CHEBI:29105"/>
    </ligand>
</feature>
<feature type="binding site" evidence="1">
    <location>
        <position position="399"/>
    </location>
    <ligand>
        <name>Zn(2+)</name>
        <dbReference type="ChEBI" id="CHEBI:29105"/>
    </ligand>
</feature>
<feature type="binding site" evidence="1">
    <location>
        <position position="525"/>
    </location>
    <ligand>
        <name>Zn(2+)</name>
        <dbReference type="ChEBI" id="CHEBI:29105"/>
    </ligand>
</feature>
<protein>
    <recommendedName>
        <fullName evidence="1">Threonine--tRNA ligase</fullName>
        <ecNumber evidence="1">6.1.1.3</ecNumber>
    </recommendedName>
    <alternativeName>
        <fullName evidence="1">Threonyl-tRNA synthetase</fullName>
        <shortName evidence="1">ThrRS</shortName>
    </alternativeName>
</protein>
<accession>A7HWJ3</accession>
<gene>
    <name evidence="1" type="primary">thrS</name>
    <name type="ordered locus">Plav_2668</name>
</gene>
<sequence>MIKLKLPDGSVREHEVPLDGLAFAESIAKSLAKKAVAIKIDGQMKDLSTVIDRDAEVEIVTRETPDGVDLLRHDASHVMAEAVQELFPGTQVTIGPVIENGFYYDFARAEPFKAEDLEKIEQRMREIVDRDETITREVWDRDAAVEYFKKIGEIYKAEIIASIPAGEQVSVYRQGNWLDLCRGPHLPSTGKLGKAFKLTKLAGAYWRGDSRNEMLQRIYGTCWANENDLKAYLTMVEEAERRDHRKIGREMDLFHLQEEAQGSVFWHPKGWRIWQALEQYVRRRIDAAGYVEVRTPQLLDSKFWEQSGHWGKYRENMFVVPDEVPSTDEDAPVLSGKAKLMAIKPMNCPAHIQIFKQGVKSYRDLPLRMAEFGCCHRNEPHGALHGLMRVRQMTQDDAHIFCTEDQIKEETEAFVALLESVYEDMGFTGTKLRLATRPDVRAGTDETWDKAEKALEEALKALGKEFDFAPGEGAFYGPKLEFHLRDAIGRSWQLGTLQLDFVLPERLDASYIGEDGNKHRPVMLHRAILGSLERFIGILIENYEGRFPMWLAPVQAVVTTITSDADPYAEEMLQKLRDAGIRAELDLRNEKINYKVREHSVAKVPAIFVAGKREAEEGTVSIRRLGSQQQQTMKLDEAIKALAEEATPPDMR</sequence>
<proteinExistence type="inferred from homology"/>
<dbReference type="EC" id="6.1.1.3" evidence="1"/>
<dbReference type="EMBL" id="CP000774">
    <property type="protein sequence ID" value="ABS64276.1"/>
    <property type="molecule type" value="Genomic_DNA"/>
</dbReference>
<dbReference type="RefSeq" id="WP_012111589.1">
    <property type="nucleotide sequence ID" value="NC_009719.1"/>
</dbReference>
<dbReference type="SMR" id="A7HWJ3"/>
<dbReference type="STRING" id="402881.Plav_2668"/>
<dbReference type="KEGG" id="pla:Plav_2668"/>
<dbReference type="eggNOG" id="COG0441">
    <property type="taxonomic scope" value="Bacteria"/>
</dbReference>
<dbReference type="HOGENOM" id="CLU_008554_0_1_5"/>
<dbReference type="OrthoDB" id="9802304at2"/>
<dbReference type="Proteomes" id="UP000006377">
    <property type="component" value="Chromosome"/>
</dbReference>
<dbReference type="GO" id="GO:0005737">
    <property type="term" value="C:cytoplasm"/>
    <property type="evidence" value="ECO:0007669"/>
    <property type="project" value="UniProtKB-SubCell"/>
</dbReference>
<dbReference type="GO" id="GO:0005524">
    <property type="term" value="F:ATP binding"/>
    <property type="evidence" value="ECO:0007669"/>
    <property type="project" value="UniProtKB-UniRule"/>
</dbReference>
<dbReference type="GO" id="GO:0046872">
    <property type="term" value="F:metal ion binding"/>
    <property type="evidence" value="ECO:0007669"/>
    <property type="project" value="UniProtKB-KW"/>
</dbReference>
<dbReference type="GO" id="GO:0004829">
    <property type="term" value="F:threonine-tRNA ligase activity"/>
    <property type="evidence" value="ECO:0007669"/>
    <property type="project" value="UniProtKB-UniRule"/>
</dbReference>
<dbReference type="GO" id="GO:0000049">
    <property type="term" value="F:tRNA binding"/>
    <property type="evidence" value="ECO:0007669"/>
    <property type="project" value="UniProtKB-KW"/>
</dbReference>
<dbReference type="GO" id="GO:0006435">
    <property type="term" value="P:threonyl-tRNA aminoacylation"/>
    <property type="evidence" value="ECO:0007669"/>
    <property type="project" value="UniProtKB-UniRule"/>
</dbReference>
<dbReference type="CDD" id="cd01667">
    <property type="entry name" value="TGS_ThrRS"/>
    <property type="match status" value="1"/>
</dbReference>
<dbReference type="CDD" id="cd00860">
    <property type="entry name" value="ThrRS_anticodon"/>
    <property type="match status" value="1"/>
</dbReference>
<dbReference type="CDD" id="cd00771">
    <property type="entry name" value="ThrRS_core"/>
    <property type="match status" value="1"/>
</dbReference>
<dbReference type="FunFam" id="3.30.54.20:FF:000002">
    <property type="entry name" value="Threonine--tRNA ligase"/>
    <property type="match status" value="1"/>
</dbReference>
<dbReference type="FunFam" id="3.30.930.10:FF:000002">
    <property type="entry name" value="Threonine--tRNA ligase"/>
    <property type="match status" value="1"/>
</dbReference>
<dbReference type="FunFam" id="3.40.50.800:FF:000001">
    <property type="entry name" value="Threonine--tRNA ligase"/>
    <property type="match status" value="1"/>
</dbReference>
<dbReference type="FunFam" id="3.30.980.10:FF:000005">
    <property type="entry name" value="Threonyl-tRNA synthetase, mitochondrial"/>
    <property type="match status" value="1"/>
</dbReference>
<dbReference type="Gene3D" id="3.10.20.30">
    <property type="match status" value="1"/>
</dbReference>
<dbReference type="Gene3D" id="3.30.54.20">
    <property type="match status" value="1"/>
</dbReference>
<dbReference type="Gene3D" id="3.40.50.800">
    <property type="entry name" value="Anticodon-binding domain"/>
    <property type="match status" value="1"/>
</dbReference>
<dbReference type="Gene3D" id="3.30.930.10">
    <property type="entry name" value="Bira Bifunctional Protein, Domain 2"/>
    <property type="match status" value="1"/>
</dbReference>
<dbReference type="Gene3D" id="3.30.980.10">
    <property type="entry name" value="Threonyl-trna Synthetase, Chain A, domain 2"/>
    <property type="match status" value="1"/>
</dbReference>
<dbReference type="HAMAP" id="MF_00184">
    <property type="entry name" value="Thr_tRNA_synth"/>
    <property type="match status" value="1"/>
</dbReference>
<dbReference type="InterPro" id="IPR002314">
    <property type="entry name" value="aa-tRNA-synt_IIb"/>
</dbReference>
<dbReference type="InterPro" id="IPR006195">
    <property type="entry name" value="aa-tRNA-synth_II"/>
</dbReference>
<dbReference type="InterPro" id="IPR045864">
    <property type="entry name" value="aa-tRNA-synth_II/BPL/LPL"/>
</dbReference>
<dbReference type="InterPro" id="IPR004154">
    <property type="entry name" value="Anticodon-bd"/>
</dbReference>
<dbReference type="InterPro" id="IPR036621">
    <property type="entry name" value="Anticodon-bd_dom_sf"/>
</dbReference>
<dbReference type="InterPro" id="IPR012675">
    <property type="entry name" value="Beta-grasp_dom_sf"/>
</dbReference>
<dbReference type="InterPro" id="IPR004095">
    <property type="entry name" value="TGS"/>
</dbReference>
<dbReference type="InterPro" id="IPR012676">
    <property type="entry name" value="TGS-like"/>
</dbReference>
<dbReference type="InterPro" id="IPR002320">
    <property type="entry name" value="Thr-tRNA-ligase_IIa"/>
</dbReference>
<dbReference type="InterPro" id="IPR018163">
    <property type="entry name" value="Thr/Ala-tRNA-synth_IIc_edit"/>
</dbReference>
<dbReference type="InterPro" id="IPR047246">
    <property type="entry name" value="ThrRS_anticodon"/>
</dbReference>
<dbReference type="InterPro" id="IPR033728">
    <property type="entry name" value="ThrRS_core"/>
</dbReference>
<dbReference type="InterPro" id="IPR012947">
    <property type="entry name" value="tRNA_SAD"/>
</dbReference>
<dbReference type="NCBIfam" id="TIGR00418">
    <property type="entry name" value="thrS"/>
    <property type="match status" value="1"/>
</dbReference>
<dbReference type="PANTHER" id="PTHR11451:SF44">
    <property type="entry name" value="THREONINE--TRNA LIGASE, CHLOROPLASTIC_MITOCHONDRIAL 2"/>
    <property type="match status" value="1"/>
</dbReference>
<dbReference type="PANTHER" id="PTHR11451">
    <property type="entry name" value="THREONINE-TRNA LIGASE"/>
    <property type="match status" value="1"/>
</dbReference>
<dbReference type="Pfam" id="PF03129">
    <property type="entry name" value="HGTP_anticodon"/>
    <property type="match status" value="1"/>
</dbReference>
<dbReference type="Pfam" id="PF02824">
    <property type="entry name" value="TGS"/>
    <property type="match status" value="1"/>
</dbReference>
<dbReference type="Pfam" id="PF00587">
    <property type="entry name" value="tRNA-synt_2b"/>
    <property type="match status" value="1"/>
</dbReference>
<dbReference type="Pfam" id="PF07973">
    <property type="entry name" value="tRNA_SAD"/>
    <property type="match status" value="1"/>
</dbReference>
<dbReference type="PRINTS" id="PR01047">
    <property type="entry name" value="TRNASYNTHTHR"/>
</dbReference>
<dbReference type="SMART" id="SM00863">
    <property type="entry name" value="tRNA_SAD"/>
    <property type="match status" value="1"/>
</dbReference>
<dbReference type="SUPFAM" id="SSF52954">
    <property type="entry name" value="Class II aaRS ABD-related"/>
    <property type="match status" value="1"/>
</dbReference>
<dbReference type="SUPFAM" id="SSF55681">
    <property type="entry name" value="Class II aaRS and biotin synthetases"/>
    <property type="match status" value="1"/>
</dbReference>
<dbReference type="SUPFAM" id="SSF81271">
    <property type="entry name" value="TGS-like"/>
    <property type="match status" value="1"/>
</dbReference>
<dbReference type="SUPFAM" id="SSF55186">
    <property type="entry name" value="ThrRS/AlaRS common domain"/>
    <property type="match status" value="1"/>
</dbReference>
<dbReference type="PROSITE" id="PS50862">
    <property type="entry name" value="AA_TRNA_LIGASE_II"/>
    <property type="match status" value="1"/>
</dbReference>
<dbReference type="PROSITE" id="PS51880">
    <property type="entry name" value="TGS"/>
    <property type="match status" value="1"/>
</dbReference>
<keyword id="KW-0030">Aminoacyl-tRNA synthetase</keyword>
<keyword id="KW-0067">ATP-binding</keyword>
<keyword id="KW-0963">Cytoplasm</keyword>
<keyword id="KW-0436">Ligase</keyword>
<keyword id="KW-0479">Metal-binding</keyword>
<keyword id="KW-0547">Nucleotide-binding</keyword>
<keyword id="KW-0648">Protein biosynthesis</keyword>
<keyword id="KW-1185">Reference proteome</keyword>
<keyword id="KW-0694">RNA-binding</keyword>
<keyword id="KW-0820">tRNA-binding</keyword>
<keyword id="KW-0862">Zinc</keyword>
<comment type="function">
    <text evidence="1">Catalyzes the attachment of threonine to tRNA(Thr) in a two-step reaction: L-threonine is first activated by ATP to form Thr-AMP and then transferred to the acceptor end of tRNA(Thr). Also edits incorrectly charged L-seryl-tRNA(Thr).</text>
</comment>
<comment type="catalytic activity">
    <reaction evidence="1">
        <text>tRNA(Thr) + L-threonine + ATP = L-threonyl-tRNA(Thr) + AMP + diphosphate + H(+)</text>
        <dbReference type="Rhea" id="RHEA:24624"/>
        <dbReference type="Rhea" id="RHEA-COMP:9670"/>
        <dbReference type="Rhea" id="RHEA-COMP:9704"/>
        <dbReference type="ChEBI" id="CHEBI:15378"/>
        <dbReference type="ChEBI" id="CHEBI:30616"/>
        <dbReference type="ChEBI" id="CHEBI:33019"/>
        <dbReference type="ChEBI" id="CHEBI:57926"/>
        <dbReference type="ChEBI" id="CHEBI:78442"/>
        <dbReference type="ChEBI" id="CHEBI:78534"/>
        <dbReference type="ChEBI" id="CHEBI:456215"/>
        <dbReference type="EC" id="6.1.1.3"/>
    </reaction>
</comment>
<comment type="cofactor">
    <cofactor evidence="1">
        <name>Zn(2+)</name>
        <dbReference type="ChEBI" id="CHEBI:29105"/>
    </cofactor>
    <text evidence="1">Binds 1 zinc ion per subunit.</text>
</comment>
<comment type="subunit">
    <text evidence="1">Homodimer.</text>
</comment>
<comment type="subcellular location">
    <subcellularLocation>
        <location evidence="1">Cytoplasm</location>
    </subcellularLocation>
</comment>
<comment type="similarity">
    <text evidence="1">Belongs to the class-II aminoacyl-tRNA synthetase family.</text>
</comment>
<organism>
    <name type="scientific">Parvibaculum lavamentivorans (strain DS-1 / DSM 13023 / NCIMB 13966)</name>
    <dbReference type="NCBI Taxonomy" id="402881"/>
    <lineage>
        <taxon>Bacteria</taxon>
        <taxon>Pseudomonadati</taxon>
        <taxon>Pseudomonadota</taxon>
        <taxon>Alphaproteobacteria</taxon>
        <taxon>Hyphomicrobiales</taxon>
        <taxon>Parvibaculaceae</taxon>
        <taxon>Parvibaculum</taxon>
    </lineage>
</organism>
<reference key="1">
    <citation type="journal article" date="2011" name="Stand. Genomic Sci.">
        <title>Complete genome sequence of Parvibaculum lavamentivorans type strain (DS-1(T)).</title>
        <authorList>
            <person name="Schleheck D."/>
            <person name="Weiss M."/>
            <person name="Pitluck S."/>
            <person name="Bruce D."/>
            <person name="Land M.L."/>
            <person name="Han S."/>
            <person name="Saunders E."/>
            <person name="Tapia R."/>
            <person name="Detter C."/>
            <person name="Brettin T."/>
            <person name="Han J."/>
            <person name="Woyke T."/>
            <person name="Goodwin L."/>
            <person name="Pennacchio L."/>
            <person name="Nolan M."/>
            <person name="Cook A.M."/>
            <person name="Kjelleberg S."/>
            <person name="Thomas T."/>
        </authorList>
    </citation>
    <scope>NUCLEOTIDE SEQUENCE [LARGE SCALE GENOMIC DNA]</scope>
    <source>
        <strain>DS-1 / DSM 13023 / NCIMB 13966</strain>
    </source>
</reference>
<evidence type="ECO:0000255" key="1">
    <source>
        <dbReference type="HAMAP-Rule" id="MF_00184"/>
    </source>
</evidence>
<evidence type="ECO:0000255" key="2">
    <source>
        <dbReference type="PROSITE-ProRule" id="PRU01228"/>
    </source>
</evidence>
<name>SYT_PARL1</name>